<comment type="function">
    <text evidence="1">Nucleotidase that shows phosphatase activity on nucleoside 5'-monophosphates.</text>
</comment>
<comment type="catalytic activity">
    <reaction evidence="1">
        <text>a ribonucleoside 5'-phosphate + H2O = a ribonucleoside + phosphate</text>
        <dbReference type="Rhea" id="RHEA:12484"/>
        <dbReference type="ChEBI" id="CHEBI:15377"/>
        <dbReference type="ChEBI" id="CHEBI:18254"/>
        <dbReference type="ChEBI" id="CHEBI:43474"/>
        <dbReference type="ChEBI" id="CHEBI:58043"/>
        <dbReference type="EC" id="3.1.3.5"/>
    </reaction>
</comment>
<comment type="cofactor">
    <cofactor evidence="1">
        <name>a divalent metal cation</name>
        <dbReference type="ChEBI" id="CHEBI:60240"/>
    </cofactor>
    <text evidence="1">Binds 1 divalent metal cation per subunit.</text>
</comment>
<comment type="subcellular location">
    <subcellularLocation>
        <location evidence="1">Cytoplasm</location>
    </subcellularLocation>
</comment>
<comment type="similarity">
    <text evidence="1">Belongs to the SurE nucleotidase family.</text>
</comment>
<proteinExistence type="inferred from homology"/>
<protein>
    <recommendedName>
        <fullName evidence="1">5'-nucleotidase SurE</fullName>
        <ecNumber evidence="1">3.1.3.5</ecNumber>
    </recommendedName>
    <alternativeName>
        <fullName evidence="1">Nucleoside 5'-monophosphate phosphohydrolase</fullName>
    </alternativeName>
</protein>
<name>SURE_METAR</name>
<organism>
    <name type="scientific">Methanocella arvoryzae (strain DSM 22066 / NBRC 105507 / MRE50)</name>
    <dbReference type="NCBI Taxonomy" id="351160"/>
    <lineage>
        <taxon>Archaea</taxon>
        <taxon>Methanobacteriati</taxon>
        <taxon>Methanobacteriota</taxon>
        <taxon>Stenosarchaea group</taxon>
        <taxon>Methanomicrobia</taxon>
        <taxon>Methanocellales</taxon>
        <taxon>Methanocellaceae</taxon>
        <taxon>Methanocella</taxon>
    </lineage>
</organism>
<feature type="chain" id="PRO_0000335300" description="5'-nucleotidase SurE">
    <location>
        <begin position="1"/>
        <end position="266"/>
    </location>
</feature>
<feature type="binding site" evidence="1">
    <location>
        <position position="10"/>
    </location>
    <ligand>
        <name>a divalent metal cation</name>
        <dbReference type="ChEBI" id="CHEBI:60240"/>
    </ligand>
</feature>
<feature type="binding site" evidence="1">
    <location>
        <position position="11"/>
    </location>
    <ligand>
        <name>a divalent metal cation</name>
        <dbReference type="ChEBI" id="CHEBI:60240"/>
    </ligand>
</feature>
<feature type="binding site" evidence="1">
    <location>
        <position position="41"/>
    </location>
    <ligand>
        <name>a divalent metal cation</name>
        <dbReference type="ChEBI" id="CHEBI:60240"/>
    </ligand>
</feature>
<feature type="binding site" evidence="1">
    <location>
        <position position="97"/>
    </location>
    <ligand>
        <name>a divalent metal cation</name>
        <dbReference type="ChEBI" id="CHEBI:60240"/>
    </ligand>
</feature>
<evidence type="ECO:0000255" key="1">
    <source>
        <dbReference type="HAMAP-Rule" id="MF_00060"/>
    </source>
</evidence>
<gene>
    <name evidence="1" type="primary">surE</name>
    <name type="ordered locus">UNCMA_09120</name>
    <name type="ORF">RCIX2221</name>
</gene>
<keyword id="KW-0963">Cytoplasm</keyword>
<keyword id="KW-0378">Hydrolase</keyword>
<keyword id="KW-0479">Metal-binding</keyword>
<keyword id="KW-0547">Nucleotide-binding</keyword>
<keyword id="KW-1185">Reference proteome</keyword>
<dbReference type="EC" id="3.1.3.5" evidence="1"/>
<dbReference type="EMBL" id="AM114193">
    <property type="protein sequence ID" value="CAJ37340.1"/>
    <property type="molecule type" value="Genomic_DNA"/>
</dbReference>
<dbReference type="RefSeq" id="WP_012035241.1">
    <property type="nucleotide sequence ID" value="NC_009464.1"/>
</dbReference>
<dbReference type="SMR" id="Q0W2Q3"/>
<dbReference type="STRING" id="351160.RCIX2221"/>
<dbReference type="GeneID" id="5144265"/>
<dbReference type="KEGG" id="rci:RCIX2221"/>
<dbReference type="PATRIC" id="fig|351160.9.peg.942"/>
<dbReference type="eggNOG" id="arCOG02303">
    <property type="taxonomic scope" value="Archaea"/>
</dbReference>
<dbReference type="OrthoDB" id="26873at2157"/>
<dbReference type="Proteomes" id="UP000000663">
    <property type="component" value="Chromosome"/>
</dbReference>
<dbReference type="GO" id="GO:0005737">
    <property type="term" value="C:cytoplasm"/>
    <property type="evidence" value="ECO:0007669"/>
    <property type="project" value="UniProtKB-SubCell"/>
</dbReference>
<dbReference type="GO" id="GO:0008253">
    <property type="term" value="F:5'-nucleotidase activity"/>
    <property type="evidence" value="ECO:0007669"/>
    <property type="project" value="UniProtKB-UniRule"/>
</dbReference>
<dbReference type="GO" id="GO:0046872">
    <property type="term" value="F:metal ion binding"/>
    <property type="evidence" value="ECO:0007669"/>
    <property type="project" value="UniProtKB-UniRule"/>
</dbReference>
<dbReference type="GO" id="GO:0000166">
    <property type="term" value="F:nucleotide binding"/>
    <property type="evidence" value="ECO:0007669"/>
    <property type="project" value="UniProtKB-KW"/>
</dbReference>
<dbReference type="Gene3D" id="3.40.1210.10">
    <property type="entry name" value="Survival protein SurE-like phosphatase/nucleotidase"/>
    <property type="match status" value="1"/>
</dbReference>
<dbReference type="HAMAP" id="MF_00060">
    <property type="entry name" value="SurE"/>
    <property type="match status" value="1"/>
</dbReference>
<dbReference type="InterPro" id="IPR030048">
    <property type="entry name" value="SurE"/>
</dbReference>
<dbReference type="InterPro" id="IPR002828">
    <property type="entry name" value="SurE-like_Pase/nucleotidase"/>
</dbReference>
<dbReference type="InterPro" id="IPR036523">
    <property type="entry name" value="SurE-like_sf"/>
</dbReference>
<dbReference type="NCBIfam" id="NF001490">
    <property type="entry name" value="PRK00346.1-4"/>
    <property type="match status" value="1"/>
</dbReference>
<dbReference type="NCBIfam" id="NF001491">
    <property type="entry name" value="PRK00346.2-1"/>
    <property type="match status" value="1"/>
</dbReference>
<dbReference type="NCBIfam" id="TIGR00087">
    <property type="entry name" value="surE"/>
    <property type="match status" value="1"/>
</dbReference>
<dbReference type="PANTHER" id="PTHR30457">
    <property type="entry name" value="5'-NUCLEOTIDASE SURE"/>
    <property type="match status" value="1"/>
</dbReference>
<dbReference type="PANTHER" id="PTHR30457:SF0">
    <property type="entry name" value="PHOSPHATASE, PUTATIVE (AFU_ORTHOLOGUE AFUA_4G01070)-RELATED"/>
    <property type="match status" value="1"/>
</dbReference>
<dbReference type="Pfam" id="PF01975">
    <property type="entry name" value="SurE"/>
    <property type="match status" value="1"/>
</dbReference>
<dbReference type="SUPFAM" id="SSF64167">
    <property type="entry name" value="SurE-like"/>
    <property type="match status" value="1"/>
</dbReference>
<reference key="1">
    <citation type="journal article" date="2006" name="Science">
        <title>Genome of rice cluster I archaea -- the key methane producers in the rice rhizosphere.</title>
        <authorList>
            <person name="Erkel C."/>
            <person name="Kube M."/>
            <person name="Reinhardt R."/>
            <person name="Liesack W."/>
        </authorList>
    </citation>
    <scope>NUCLEOTIDE SEQUENCE [LARGE SCALE GENOMIC DNA]</scope>
    <source>
        <strain>DSM 22066 / NBRC 105507 / MRE50</strain>
    </source>
</reference>
<accession>Q0W2Q3</accession>
<sequence length="266" mass="28805">MTYRILITNDDGVASPGLMAVYEAVRSLGEAVIVAPASQQSAVGRSMTLFEPLRIEKMNLQGTMAYAVNGTPTDSVIMGMYVVMADRKPDLVISGINIGENLSAEAVTTSGTIGAAMEAANQGVPAIAVSMHVLEEADKFATAAMAQDYAVAQRLIGKLARQVLENGLPEGVDLLNVNIPAGATPETPVVVTRLARRMYDTIVHHRMDPRGRSYYWVDGTIVADAPEGTDLHTVHQRRQVSITPLRLDMTACEQTVEIERIIRDNW</sequence>